<gene>
    <name evidence="1" type="primary">miaB</name>
    <name type="ordered locus">c0747</name>
</gene>
<accession>P0AEI2</accession>
<accession>P77645</accession>
<organism>
    <name type="scientific">Escherichia coli O6:H1 (strain CFT073 / ATCC 700928 / UPEC)</name>
    <dbReference type="NCBI Taxonomy" id="199310"/>
    <lineage>
        <taxon>Bacteria</taxon>
        <taxon>Pseudomonadati</taxon>
        <taxon>Pseudomonadota</taxon>
        <taxon>Gammaproteobacteria</taxon>
        <taxon>Enterobacterales</taxon>
        <taxon>Enterobacteriaceae</taxon>
        <taxon>Escherichia</taxon>
    </lineage>
</organism>
<name>MIAB_ECOL6</name>
<feature type="chain" id="PRO_0000141736" description="tRNA-2-methylthio-N(6)-dimethylallyladenosine synthase">
    <location>
        <begin position="1"/>
        <end position="474"/>
    </location>
</feature>
<feature type="domain" description="MTTase N-terminal" evidence="1">
    <location>
        <begin position="3"/>
        <end position="120"/>
    </location>
</feature>
<feature type="domain" description="Radical SAM core" evidence="2">
    <location>
        <begin position="143"/>
        <end position="375"/>
    </location>
</feature>
<feature type="domain" description="TRAM" evidence="1">
    <location>
        <begin position="378"/>
        <end position="441"/>
    </location>
</feature>
<feature type="binding site" evidence="1">
    <location>
        <position position="12"/>
    </location>
    <ligand>
        <name>[4Fe-4S] cluster</name>
        <dbReference type="ChEBI" id="CHEBI:49883"/>
        <label>1</label>
    </ligand>
</feature>
<feature type="binding site" evidence="1">
    <location>
        <position position="49"/>
    </location>
    <ligand>
        <name>[4Fe-4S] cluster</name>
        <dbReference type="ChEBI" id="CHEBI:49883"/>
        <label>1</label>
    </ligand>
</feature>
<feature type="binding site" evidence="1">
    <location>
        <position position="83"/>
    </location>
    <ligand>
        <name>[4Fe-4S] cluster</name>
        <dbReference type="ChEBI" id="CHEBI:49883"/>
        <label>1</label>
    </ligand>
</feature>
<feature type="binding site" evidence="1">
    <location>
        <position position="157"/>
    </location>
    <ligand>
        <name>[4Fe-4S] cluster</name>
        <dbReference type="ChEBI" id="CHEBI:49883"/>
        <label>2</label>
        <note>4Fe-4S-S-AdoMet</note>
    </ligand>
</feature>
<feature type="binding site" evidence="1">
    <location>
        <position position="161"/>
    </location>
    <ligand>
        <name>[4Fe-4S] cluster</name>
        <dbReference type="ChEBI" id="CHEBI:49883"/>
        <label>2</label>
        <note>4Fe-4S-S-AdoMet</note>
    </ligand>
</feature>
<feature type="binding site" evidence="1">
    <location>
        <position position="164"/>
    </location>
    <ligand>
        <name>[4Fe-4S] cluster</name>
        <dbReference type="ChEBI" id="CHEBI:49883"/>
        <label>2</label>
        <note>4Fe-4S-S-AdoMet</note>
    </ligand>
</feature>
<reference key="1">
    <citation type="journal article" date="2002" name="Proc. Natl. Acad. Sci. U.S.A.">
        <title>Extensive mosaic structure revealed by the complete genome sequence of uropathogenic Escherichia coli.</title>
        <authorList>
            <person name="Welch R.A."/>
            <person name="Burland V."/>
            <person name="Plunkett G. III"/>
            <person name="Redford P."/>
            <person name="Roesch P."/>
            <person name="Rasko D."/>
            <person name="Buckles E.L."/>
            <person name="Liou S.-R."/>
            <person name="Boutin A."/>
            <person name="Hackett J."/>
            <person name="Stroud D."/>
            <person name="Mayhew G.F."/>
            <person name="Rose D.J."/>
            <person name="Zhou S."/>
            <person name="Schwartz D.C."/>
            <person name="Perna N.T."/>
            <person name="Mobley H.L.T."/>
            <person name="Donnenberg M.S."/>
            <person name="Blattner F.R."/>
        </authorList>
    </citation>
    <scope>NUCLEOTIDE SEQUENCE [LARGE SCALE GENOMIC DNA]</scope>
    <source>
        <strain>CFT073 / ATCC 700928 / UPEC</strain>
    </source>
</reference>
<protein>
    <recommendedName>
        <fullName evidence="1">tRNA-2-methylthio-N(6)-dimethylallyladenosine synthase</fullName>
        <ecNumber evidence="1">2.8.4.3</ecNumber>
    </recommendedName>
    <alternativeName>
        <fullName evidence="1">(Dimethylallyl)adenosine tRNA methylthiotransferase MiaB</fullName>
    </alternativeName>
    <alternativeName>
        <fullName evidence="1">tRNA-i(6)A37 methylthiotransferase</fullName>
    </alternativeName>
</protein>
<keyword id="KW-0004">4Fe-4S</keyword>
<keyword id="KW-0963">Cytoplasm</keyword>
<keyword id="KW-0408">Iron</keyword>
<keyword id="KW-0411">Iron-sulfur</keyword>
<keyword id="KW-0479">Metal-binding</keyword>
<keyword id="KW-1185">Reference proteome</keyword>
<keyword id="KW-0949">S-adenosyl-L-methionine</keyword>
<keyword id="KW-0808">Transferase</keyword>
<keyword id="KW-0819">tRNA processing</keyword>
<comment type="function">
    <text evidence="1">Catalyzes the methylthiolation of N6-(dimethylallyl)adenosine (i(6)A), leading to the formation of 2-methylthio-N6-(dimethylallyl)adenosine (ms(2)i(6)A) at position 37 in tRNAs that read codons beginning with uridine.</text>
</comment>
<comment type="catalytic activity">
    <reaction evidence="1">
        <text>N(6)-dimethylallyladenosine(37) in tRNA + (sulfur carrier)-SH + AH2 + 2 S-adenosyl-L-methionine = 2-methylsulfanyl-N(6)-dimethylallyladenosine(37) in tRNA + (sulfur carrier)-H + 5'-deoxyadenosine + L-methionine + A + S-adenosyl-L-homocysteine + 2 H(+)</text>
        <dbReference type="Rhea" id="RHEA:37067"/>
        <dbReference type="Rhea" id="RHEA-COMP:10375"/>
        <dbReference type="Rhea" id="RHEA-COMP:10376"/>
        <dbReference type="Rhea" id="RHEA-COMP:14737"/>
        <dbReference type="Rhea" id="RHEA-COMP:14739"/>
        <dbReference type="ChEBI" id="CHEBI:13193"/>
        <dbReference type="ChEBI" id="CHEBI:15378"/>
        <dbReference type="ChEBI" id="CHEBI:17319"/>
        <dbReference type="ChEBI" id="CHEBI:17499"/>
        <dbReference type="ChEBI" id="CHEBI:29917"/>
        <dbReference type="ChEBI" id="CHEBI:57844"/>
        <dbReference type="ChEBI" id="CHEBI:57856"/>
        <dbReference type="ChEBI" id="CHEBI:59789"/>
        <dbReference type="ChEBI" id="CHEBI:64428"/>
        <dbReference type="ChEBI" id="CHEBI:74415"/>
        <dbReference type="ChEBI" id="CHEBI:74417"/>
        <dbReference type="EC" id="2.8.4.3"/>
    </reaction>
</comment>
<comment type="cofactor">
    <cofactor evidence="1">
        <name>[4Fe-4S] cluster</name>
        <dbReference type="ChEBI" id="CHEBI:49883"/>
    </cofactor>
    <text evidence="1">Binds 2 [4Fe-4S] clusters. One cluster is coordinated with 3 cysteines and an exchangeable S-adenosyl-L-methionine.</text>
</comment>
<comment type="subunit">
    <text evidence="1">Monomer.</text>
</comment>
<comment type="subcellular location">
    <subcellularLocation>
        <location evidence="1">Cytoplasm</location>
    </subcellularLocation>
</comment>
<comment type="similarity">
    <text evidence="1">Belongs to the methylthiotransferase family. MiaB subfamily.</text>
</comment>
<proteinExistence type="inferred from homology"/>
<evidence type="ECO:0000255" key="1">
    <source>
        <dbReference type="HAMAP-Rule" id="MF_01864"/>
    </source>
</evidence>
<evidence type="ECO:0000255" key="2">
    <source>
        <dbReference type="PROSITE-ProRule" id="PRU01266"/>
    </source>
</evidence>
<dbReference type="EC" id="2.8.4.3" evidence="1"/>
<dbReference type="EMBL" id="AE014075">
    <property type="protein sequence ID" value="AAN79220.1"/>
    <property type="molecule type" value="Genomic_DNA"/>
</dbReference>
<dbReference type="RefSeq" id="WP_000162740.1">
    <property type="nucleotide sequence ID" value="NZ_CP051263.1"/>
</dbReference>
<dbReference type="SMR" id="P0AEI2"/>
<dbReference type="STRING" id="199310.c0747"/>
<dbReference type="GeneID" id="86863171"/>
<dbReference type="KEGG" id="ecc:c0747"/>
<dbReference type="eggNOG" id="COG0621">
    <property type="taxonomic scope" value="Bacteria"/>
</dbReference>
<dbReference type="HOGENOM" id="CLU_018697_2_0_6"/>
<dbReference type="BioCyc" id="ECOL199310:C0747-MONOMER"/>
<dbReference type="Proteomes" id="UP000001410">
    <property type="component" value="Chromosome"/>
</dbReference>
<dbReference type="GO" id="GO:0005829">
    <property type="term" value="C:cytosol"/>
    <property type="evidence" value="ECO:0007669"/>
    <property type="project" value="TreeGrafter"/>
</dbReference>
<dbReference type="GO" id="GO:0051539">
    <property type="term" value="F:4 iron, 4 sulfur cluster binding"/>
    <property type="evidence" value="ECO:0007669"/>
    <property type="project" value="UniProtKB-UniRule"/>
</dbReference>
<dbReference type="GO" id="GO:0046872">
    <property type="term" value="F:metal ion binding"/>
    <property type="evidence" value="ECO:0007669"/>
    <property type="project" value="UniProtKB-KW"/>
</dbReference>
<dbReference type="GO" id="GO:0035597">
    <property type="term" value="F:N6-isopentenyladenosine methylthiotransferase activity"/>
    <property type="evidence" value="ECO:0007669"/>
    <property type="project" value="TreeGrafter"/>
</dbReference>
<dbReference type="CDD" id="cd01335">
    <property type="entry name" value="Radical_SAM"/>
    <property type="match status" value="1"/>
</dbReference>
<dbReference type="FunFam" id="3.40.50.12160:FF:000001">
    <property type="entry name" value="tRNA-2-methylthio-N(6)-dimethylallyladenosine synthase"/>
    <property type="match status" value="1"/>
</dbReference>
<dbReference type="FunFam" id="3.80.30.20:FF:000001">
    <property type="entry name" value="tRNA-2-methylthio-N(6)-dimethylallyladenosine synthase 2"/>
    <property type="match status" value="1"/>
</dbReference>
<dbReference type="Gene3D" id="3.40.50.12160">
    <property type="entry name" value="Methylthiotransferase, N-terminal domain"/>
    <property type="match status" value="1"/>
</dbReference>
<dbReference type="Gene3D" id="3.80.30.20">
    <property type="entry name" value="tm_1862 like domain"/>
    <property type="match status" value="1"/>
</dbReference>
<dbReference type="HAMAP" id="MF_01864">
    <property type="entry name" value="tRNA_metthiotr_MiaB"/>
    <property type="match status" value="1"/>
</dbReference>
<dbReference type="InterPro" id="IPR006638">
    <property type="entry name" value="Elp3/MiaA/NifB-like_rSAM"/>
</dbReference>
<dbReference type="InterPro" id="IPR005839">
    <property type="entry name" value="Methylthiotransferase"/>
</dbReference>
<dbReference type="InterPro" id="IPR020612">
    <property type="entry name" value="Methylthiotransferase_CS"/>
</dbReference>
<dbReference type="InterPro" id="IPR013848">
    <property type="entry name" value="Methylthiotransferase_N"/>
</dbReference>
<dbReference type="InterPro" id="IPR038135">
    <property type="entry name" value="Methylthiotransferase_N_sf"/>
</dbReference>
<dbReference type="InterPro" id="IPR006463">
    <property type="entry name" value="MiaB_methiolase"/>
</dbReference>
<dbReference type="InterPro" id="IPR007197">
    <property type="entry name" value="rSAM"/>
</dbReference>
<dbReference type="InterPro" id="IPR023404">
    <property type="entry name" value="rSAM_horseshoe"/>
</dbReference>
<dbReference type="InterPro" id="IPR002792">
    <property type="entry name" value="TRAM_dom"/>
</dbReference>
<dbReference type="NCBIfam" id="TIGR01574">
    <property type="entry name" value="miaB-methiolase"/>
    <property type="match status" value="1"/>
</dbReference>
<dbReference type="NCBIfam" id="TIGR00089">
    <property type="entry name" value="MiaB/RimO family radical SAM methylthiotransferase"/>
    <property type="match status" value="1"/>
</dbReference>
<dbReference type="PANTHER" id="PTHR43020">
    <property type="entry name" value="CDK5 REGULATORY SUBUNIT-ASSOCIATED PROTEIN 1"/>
    <property type="match status" value="1"/>
</dbReference>
<dbReference type="PANTHER" id="PTHR43020:SF2">
    <property type="entry name" value="MITOCHONDRIAL TRNA METHYLTHIOTRANSFERASE CDK5RAP1"/>
    <property type="match status" value="1"/>
</dbReference>
<dbReference type="Pfam" id="PF04055">
    <property type="entry name" value="Radical_SAM"/>
    <property type="match status" value="1"/>
</dbReference>
<dbReference type="Pfam" id="PF01938">
    <property type="entry name" value="TRAM"/>
    <property type="match status" value="1"/>
</dbReference>
<dbReference type="Pfam" id="PF00919">
    <property type="entry name" value="UPF0004"/>
    <property type="match status" value="1"/>
</dbReference>
<dbReference type="SFLD" id="SFLDF00273">
    <property type="entry name" value="(dimethylallyl)adenosine_tRNA"/>
    <property type="match status" value="1"/>
</dbReference>
<dbReference type="SFLD" id="SFLDG01082">
    <property type="entry name" value="B12-binding_domain_containing"/>
    <property type="match status" value="1"/>
</dbReference>
<dbReference type="SFLD" id="SFLDS00029">
    <property type="entry name" value="Radical_SAM"/>
    <property type="match status" value="1"/>
</dbReference>
<dbReference type="SMART" id="SM00729">
    <property type="entry name" value="Elp3"/>
    <property type="match status" value="1"/>
</dbReference>
<dbReference type="SUPFAM" id="SSF102114">
    <property type="entry name" value="Radical SAM enzymes"/>
    <property type="match status" value="1"/>
</dbReference>
<dbReference type="PROSITE" id="PS51449">
    <property type="entry name" value="MTTASE_N"/>
    <property type="match status" value="1"/>
</dbReference>
<dbReference type="PROSITE" id="PS01278">
    <property type="entry name" value="MTTASE_RADICAL"/>
    <property type="match status" value="1"/>
</dbReference>
<dbReference type="PROSITE" id="PS51918">
    <property type="entry name" value="RADICAL_SAM"/>
    <property type="match status" value="1"/>
</dbReference>
<dbReference type="PROSITE" id="PS50926">
    <property type="entry name" value="TRAM"/>
    <property type="match status" value="1"/>
</dbReference>
<sequence>MTKKLHIKTWGCQMNEYDSSKMADLLDATHGYQLTDVAEEADVLLLNTCSIREKAQEKVFHQLGRWKLLKEKNPDLIIGVGGCVASQEGEHIRQRAHYVDIIFGPQTLHRLPEMINSVRGDRSPVVDISFPEIEKFDRLPEPRAEGPTAFVSIMEGCNKYCTYCVVPYTRGEEVSRPSDDILFEIAQLAAQGVREVNLLGQNVNAWRGENYDGTTGSFADLLRLVAAIDGIDRIRFTTSHPIEFTDDIIEVYRDTPELVSFLHLPVQSGSDRILNLMGRTHTALEYKAIIRKLRAARPDIQISSDFIVGFPGETTEDFEKTMKLIADVNFDMSYSFIFSARPGTPAADMVDDVPEEEKKQRLYILQERINQQAMAWSRRMLGTTQRILVEGTSRKSIMELSGRTENNRVVNFEGTPDMIGKFVDVEITDVYPNSLRGKVVRTEDEMGLRVAETPESVIARTRKENDLGVGYYQP</sequence>